<reference key="1">
    <citation type="submission" date="2006-01" db="EMBL/GenBank/DDBJ databases">
        <title>Complete sequence of Anaeromyxobacter dehalogenans 2CP-C.</title>
        <authorList>
            <person name="Copeland A."/>
            <person name="Lucas S."/>
            <person name="Lapidus A."/>
            <person name="Barry K."/>
            <person name="Detter J.C."/>
            <person name="Glavina T."/>
            <person name="Hammon N."/>
            <person name="Israni S."/>
            <person name="Pitluck S."/>
            <person name="Brettin T."/>
            <person name="Bruce D."/>
            <person name="Han C."/>
            <person name="Tapia R."/>
            <person name="Gilna P."/>
            <person name="Kiss H."/>
            <person name="Schmutz J."/>
            <person name="Larimer F."/>
            <person name="Land M."/>
            <person name="Kyrpides N."/>
            <person name="Anderson I."/>
            <person name="Sanford R.A."/>
            <person name="Ritalahti K.M."/>
            <person name="Thomas H.S."/>
            <person name="Kirby J.R."/>
            <person name="Zhulin I.B."/>
            <person name="Loeffler F.E."/>
            <person name="Richardson P."/>
        </authorList>
    </citation>
    <scope>NUCLEOTIDE SEQUENCE [LARGE SCALE GENOMIC DNA]</scope>
    <source>
        <strain>2CP-C</strain>
    </source>
</reference>
<dbReference type="EC" id="2.4.1.227" evidence="1"/>
<dbReference type="EMBL" id="CP000251">
    <property type="protein sequence ID" value="ABC83537.1"/>
    <property type="molecule type" value="Genomic_DNA"/>
</dbReference>
<dbReference type="RefSeq" id="WP_011422819.1">
    <property type="nucleotide sequence ID" value="NC_007760.1"/>
</dbReference>
<dbReference type="SMR" id="Q2IG27"/>
<dbReference type="STRING" id="290397.Adeh_3771"/>
<dbReference type="CAZy" id="GT28">
    <property type="family name" value="Glycosyltransferase Family 28"/>
</dbReference>
<dbReference type="KEGG" id="ade:Adeh_3771"/>
<dbReference type="eggNOG" id="COG0707">
    <property type="taxonomic scope" value="Bacteria"/>
</dbReference>
<dbReference type="HOGENOM" id="CLU_037404_0_1_7"/>
<dbReference type="OrthoDB" id="9808936at2"/>
<dbReference type="UniPathway" id="UPA00219"/>
<dbReference type="Proteomes" id="UP000001935">
    <property type="component" value="Chromosome"/>
</dbReference>
<dbReference type="GO" id="GO:0005886">
    <property type="term" value="C:plasma membrane"/>
    <property type="evidence" value="ECO:0007669"/>
    <property type="project" value="UniProtKB-SubCell"/>
</dbReference>
<dbReference type="GO" id="GO:0051991">
    <property type="term" value="F:UDP-N-acetyl-D-glucosamine:N-acetylmuramoyl-L-alanyl-D-glutamyl-meso-2,6-diaminopimelyl-D-alanyl-D-alanine-diphosphoundecaprenol 4-beta-N-acetylglucosaminlytransferase activity"/>
    <property type="evidence" value="ECO:0007669"/>
    <property type="project" value="RHEA"/>
</dbReference>
<dbReference type="GO" id="GO:0050511">
    <property type="term" value="F:undecaprenyldiphospho-muramoylpentapeptide beta-N-acetylglucosaminyltransferase activity"/>
    <property type="evidence" value="ECO:0007669"/>
    <property type="project" value="UniProtKB-UniRule"/>
</dbReference>
<dbReference type="GO" id="GO:0005975">
    <property type="term" value="P:carbohydrate metabolic process"/>
    <property type="evidence" value="ECO:0007669"/>
    <property type="project" value="InterPro"/>
</dbReference>
<dbReference type="GO" id="GO:0051301">
    <property type="term" value="P:cell division"/>
    <property type="evidence" value="ECO:0007669"/>
    <property type="project" value="UniProtKB-KW"/>
</dbReference>
<dbReference type="GO" id="GO:0071555">
    <property type="term" value="P:cell wall organization"/>
    <property type="evidence" value="ECO:0007669"/>
    <property type="project" value="UniProtKB-KW"/>
</dbReference>
<dbReference type="GO" id="GO:0030259">
    <property type="term" value="P:lipid glycosylation"/>
    <property type="evidence" value="ECO:0007669"/>
    <property type="project" value="UniProtKB-UniRule"/>
</dbReference>
<dbReference type="GO" id="GO:0009252">
    <property type="term" value="P:peptidoglycan biosynthetic process"/>
    <property type="evidence" value="ECO:0007669"/>
    <property type="project" value="UniProtKB-UniRule"/>
</dbReference>
<dbReference type="GO" id="GO:0008360">
    <property type="term" value="P:regulation of cell shape"/>
    <property type="evidence" value="ECO:0007669"/>
    <property type="project" value="UniProtKB-KW"/>
</dbReference>
<dbReference type="CDD" id="cd03785">
    <property type="entry name" value="GT28_MurG"/>
    <property type="match status" value="1"/>
</dbReference>
<dbReference type="Gene3D" id="3.40.50.2000">
    <property type="entry name" value="Glycogen Phosphorylase B"/>
    <property type="match status" value="2"/>
</dbReference>
<dbReference type="HAMAP" id="MF_00033">
    <property type="entry name" value="MurG"/>
    <property type="match status" value="1"/>
</dbReference>
<dbReference type="InterPro" id="IPR006009">
    <property type="entry name" value="GlcNAc_MurG"/>
</dbReference>
<dbReference type="InterPro" id="IPR007235">
    <property type="entry name" value="Glyco_trans_28_C"/>
</dbReference>
<dbReference type="InterPro" id="IPR004276">
    <property type="entry name" value="GlycoTrans_28_N"/>
</dbReference>
<dbReference type="NCBIfam" id="TIGR01133">
    <property type="entry name" value="murG"/>
    <property type="match status" value="1"/>
</dbReference>
<dbReference type="PANTHER" id="PTHR21015:SF22">
    <property type="entry name" value="GLYCOSYLTRANSFERASE"/>
    <property type="match status" value="1"/>
</dbReference>
<dbReference type="PANTHER" id="PTHR21015">
    <property type="entry name" value="UDP-N-ACETYLGLUCOSAMINE--N-ACETYLMURAMYL-(PENTAPEPTIDE) PYROPHOSPHORYL-UNDECAPRENOL N-ACETYLGLUCOSAMINE TRANSFERASE 1"/>
    <property type="match status" value="1"/>
</dbReference>
<dbReference type="Pfam" id="PF04101">
    <property type="entry name" value="Glyco_tran_28_C"/>
    <property type="match status" value="1"/>
</dbReference>
<dbReference type="Pfam" id="PF03033">
    <property type="entry name" value="Glyco_transf_28"/>
    <property type="match status" value="1"/>
</dbReference>
<dbReference type="SUPFAM" id="SSF53756">
    <property type="entry name" value="UDP-Glycosyltransferase/glycogen phosphorylase"/>
    <property type="match status" value="1"/>
</dbReference>
<sequence length="383" mass="41530">MRMMVAGGGTGGHVFPGIALAEEVVTRHPANDVVFVGTARGLEASVVPAAGFPIELIEVKGLKGKGLVGALLNLLLLPRAFLQSWRILRRWRPDVVVGVGGYASGPVVLTAWAMRIPTAVQEQNAIAGLTNRLLGRVVKAAFTAFPEAARHFAPRKVYQLGNPIRRRLMENYMRPESAHGAPRLLVFGGSQGAHALNMRVIEALPHLADLRERIQITHQTGARDREYVEKGYRACGFTPDVREFIDDMSAAYAGCDLVVCRAGATTLAELTVCKKPSILVPFPAAADNHQVKNARSLVDAGAAVMIEERDLTGEVLAREIRDILDAPERRERMARAAGRLGSPQAAKEIADVCMELVRRRWGSPFGQAREPGQKPARPPDLAS</sequence>
<comment type="function">
    <text evidence="1">Cell wall formation. Catalyzes the transfer of a GlcNAc subunit on undecaprenyl-pyrophosphoryl-MurNAc-pentapeptide (lipid intermediate I) to form undecaprenyl-pyrophosphoryl-MurNAc-(pentapeptide)GlcNAc (lipid intermediate II).</text>
</comment>
<comment type="catalytic activity">
    <reaction evidence="1">
        <text>di-trans,octa-cis-undecaprenyl diphospho-N-acetyl-alpha-D-muramoyl-L-alanyl-D-glutamyl-meso-2,6-diaminopimeloyl-D-alanyl-D-alanine + UDP-N-acetyl-alpha-D-glucosamine = di-trans,octa-cis-undecaprenyl diphospho-[N-acetyl-alpha-D-glucosaminyl-(1-&gt;4)]-N-acetyl-alpha-D-muramoyl-L-alanyl-D-glutamyl-meso-2,6-diaminopimeloyl-D-alanyl-D-alanine + UDP + H(+)</text>
        <dbReference type="Rhea" id="RHEA:31227"/>
        <dbReference type="ChEBI" id="CHEBI:15378"/>
        <dbReference type="ChEBI" id="CHEBI:57705"/>
        <dbReference type="ChEBI" id="CHEBI:58223"/>
        <dbReference type="ChEBI" id="CHEBI:61387"/>
        <dbReference type="ChEBI" id="CHEBI:61388"/>
        <dbReference type="EC" id="2.4.1.227"/>
    </reaction>
</comment>
<comment type="pathway">
    <text evidence="1">Cell wall biogenesis; peptidoglycan biosynthesis.</text>
</comment>
<comment type="subcellular location">
    <subcellularLocation>
        <location evidence="1">Cell inner membrane</location>
        <topology evidence="1">Peripheral membrane protein</topology>
        <orientation evidence="1">Cytoplasmic side</orientation>
    </subcellularLocation>
</comment>
<comment type="similarity">
    <text evidence="1">Belongs to the glycosyltransferase 28 family. MurG subfamily.</text>
</comment>
<protein>
    <recommendedName>
        <fullName evidence="1">UDP-N-acetylglucosamine--N-acetylmuramyl-(pentapeptide) pyrophosphoryl-undecaprenol N-acetylglucosamine transferase</fullName>
        <ecNumber evidence="1">2.4.1.227</ecNumber>
    </recommendedName>
    <alternativeName>
        <fullName evidence="1">Undecaprenyl-PP-MurNAc-pentapeptide-UDPGlcNAc GlcNAc transferase</fullName>
    </alternativeName>
</protein>
<gene>
    <name evidence="1" type="primary">murG</name>
    <name type="ordered locus">Adeh_3771</name>
</gene>
<evidence type="ECO:0000255" key="1">
    <source>
        <dbReference type="HAMAP-Rule" id="MF_00033"/>
    </source>
</evidence>
<evidence type="ECO:0000256" key="2">
    <source>
        <dbReference type="SAM" id="MobiDB-lite"/>
    </source>
</evidence>
<proteinExistence type="inferred from homology"/>
<accession>Q2IG27</accession>
<organism>
    <name type="scientific">Anaeromyxobacter dehalogenans (strain 2CP-C)</name>
    <dbReference type="NCBI Taxonomy" id="290397"/>
    <lineage>
        <taxon>Bacteria</taxon>
        <taxon>Pseudomonadati</taxon>
        <taxon>Myxococcota</taxon>
        <taxon>Myxococcia</taxon>
        <taxon>Myxococcales</taxon>
        <taxon>Cystobacterineae</taxon>
        <taxon>Anaeromyxobacteraceae</taxon>
        <taxon>Anaeromyxobacter</taxon>
    </lineage>
</organism>
<keyword id="KW-0131">Cell cycle</keyword>
<keyword id="KW-0132">Cell division</keyword>
<keyword id="KW-0997">Cell inner membrane</keyword>
<keyword id="KW-1003">Cell membrane</keyword>
<keyword id="KW-0133">Cell shape</keyword>
<keyword id="KW-0961">Cell wall biogenesis/degradation</keyword>
<keyword id="KW-0328">Glycosyltransferase</keyword>
<keyword id="KW-0472">Membrane</keyword>
<keyword id="KW-0573">Peptidoglycan synthesis</keyword>
<keyword id="KW-1185">Reference proteome</keyword>
<keyword id="KW-0808">Transferase</keyword>
<feature type="chain" id="PRO_1000002612" description="UDP-N-acetylglucosamine--N-acetylmuramyl-(pentapeptide) pyrophosphoryl-undecaprenol N-acetylglucosamine transferase">
    <location>
        <begin position="1"/>
        <end position="383"/>
    </location>
</feature>
<feature type="region of interest" description="Disordered" evidence="2">
    <location>
        <begin position="364"/>
        <end position="383"/>
    </location>
</feature>
<feature type="binding site" evidence="1">
    <location>
        <begin position="10"/>
        <end position="12"/>
    </location>
    <ligand>
        <name>UDP-N-acetyl-alpha-D-glucosamine</name>
        <dbReference type="ChEBI" id="CHEBI:57705"/>
    </ligand>
</feature>
<feature type="binding site" evidence="1">
    <location>
        <position position="124"/>
    </location>
    <ligand>
        <name>UDP-N-acetyl-alpha-D-glucosamine</name>
        <dbReference type="ChEBI" id="CHEBI:57705"/>
    </ligand>
</feature>
<feature type="binding site" evidence="1">
    <location>
        <position position="165"/>
    </location>
    <ligand>
        <name>UDP-N-acetyl-alpha-D-glucosamine</name>
        <dbReference type="ChEBI" id="CHEBI:57705"/>
    </ligand>
</feature>
<feature type="binding site" evidence="1">
    <location>
        <position position="190"/>
    </location>
    <ligand>
        <name>UDP-N-acetyl-alpha-D-glucosamine</name>
        <dbReference type="ChEBI" id="CHEBI:57705"/>
    </ligand>
</feature>
<feature type="binding site" evidence="1">
    <location>
        <position position="245"/>
    </location>
    <ligand>
        <name>UDP-N-acetyl-alpha-D-glucosamine</name>
        <dbReference type="ChEBI" id="CHEBI:57705"/>
    </ligand>
</feature>
<feature type="binding site" evidence="1">
    <location>
        <position position="290"/>
    </location>
    <ligand>
        <name>UDP-N-acetyl-alpha-D-glucosamine</name>
        <dbReference type="ChEBI" id="CHEBI:57705"/>
    </ligand>
</feature>
<name>MURG_ANADE</name>